<feature type="chain" id="PRO_1000024056" description="Dihydroorotase">
    <location>
        <begin position="1"/>
        <end position="343"/>
    </location>
</feature>
<feature type="active site" evidence="1">
    <location>
        <position position="247"/>
    </location>
</feature>
<feature type="binding site" evidence="1">
    <location>
        <position position="13"/>
    </location>
    <ligand>
        <name>Zn(2+)</name>
        <dbReference type="ChEBI" id="CHEBI:29105"/>
        <label>1</label>
    </ligand>
</feature>
<feature type="binding site" evidence="1">
    <location>
        <begin position="15"/>
        <end position="17"/>
    </location>
    <ligand>
        <name>substrate</name>
    </ligand>
</feature>
<feature type="binding site" evidence="1">
    <location>
        <position position="15"/>
    </location>
    <ligand>
        <name>Zn(2+)</name>
        <dbReference type="ChEBI" id="CHEBI:29105"/>
        <label>1</label>
    </ligand>
</feature>
<feature type="binding site" evidence="1">
    <location>
        <position position="41"/>
    </location>
    <ligand>
        <name>substrate</name>
    </ligand>
</feature>
<feature type="binding site" description="via carbamate group" evidence="1">
    <location>
        <position position="99"/>
    </location>
    <ligand>
        <name>Zn(2+)</name>
        <dbReference type="ChEBI" id="CHEBI:29105"/>
        <label>1</label>
    </ligand>
</feature>
<feature type="binding site" description="via carbamate group" evidence="1">
    <location>
        <position position="99"/>
    </location>
    <ligand>
        <name>Zn(2+)</name>
        <dbReference type="ChEBI" id="CHEBI:29105"/>
        <label>2</label>
    </ligand>
</feature>
<feature type="binding site" evidence="1">
    <location>
        <position position="136"/>
    </location>
    <ligand>
        <name>substrate</name>
    </ligand>
</feature>
<feature type="binding site" evidence="1">
    <location>
        <position position="136"/>
    </location>
    <ligand>
        <name>Zn(2+)</name>
        <dbReference type="ChEBI" id="CHEBI:29105"/>
        <label>2</label>
    </ligand>
</feature>
<feature type="binding site" evidence="1">
    <location>
        <position position="174"/>
    </location>
    <ligand>
        <name>Zn(2+)</name>
        <dbReference type="ChEBI" id="CHEBI:29105"/>
        <label>2</label>
    </ligand>
</feature>
<feature type="binding site" evidence="1">
    <location>
        <position position="219"/>
    </location>
    <ligand>
        <name>substrate</name>
    </ligand>
</feature>
<feature type="binding site" evidence="1">
    <location>
        <position position="247"/>
    </location>
    <ligand>
        <name>Zn(2+)</name>
        <dbReference type="ChEBI" id="CHEBI:29105"/>
        <label>1</label>
    </ligand>
</feature>
<feature type="binding site" evidence="1">
    <location>
        <position position="251"/>
    </location>
    <ligand>
        <name>substrate</name>
    </ligand>
</feature>
<feature type="binding site" evidence="1">
    <location>
        <position position="263"/>
    </location>
    <ligand>
        <name>substrate</name>
    </ligand>
</feature>
<feature type="modified residue" description="N6-carboxylysine" evidence="1">
    <location>
        <position position="99"/>
    </location>
</feature>
<reference key="1">
    <citation type="journal article" date="2002" name="Nat. Biotechnol.">
        <title>Genome sequence of the dissimilatory metal ion-reducing bacterium Shewanella oneidensis.</title>
        <authorList>
            <person name="Heidelberg J.F."/>
            <person name="Paulsen I.T."/>
            <person name="Nelson K.E."/>
            <person name="Gaidos E.J."/>
            <person name="Nelson W.C."/>
            <person name="Read T.D."/>
            <person name="Eisen J.A."/>
            <person name="Seshadri R."/>
            <person name="Ward N.L."/>
            <person name="Methe B.A."/>
            <person name="Clayton R.A."/>
            <person name="Meyer T."/>
            <person name="Tsapin A."/>
            <person name="Scott J."/>
            <person name="Beanan M.J."/>
            <person name="Brinkac L.M."/>
            <person name="Daugherty S.C."/>
            <person name="DeBoy R.T."/>
            <person name="Dodson R.J."/>
            <person name="Durkin A.S."/>
            <person name="Haft D.H."/>
            <person name="Kolonay J.F."/>
            <person name="Madupu R."/>
            <person name="Peterson J.D."/>
            <person name="Umayam L.A."/>
            <person name="White O."/>
            <person name="Wolf A.M."/>
            <person name="Vamathevan J.J."/>
            <person name="Weidman J.F."/>
            <person name="Impraim M."/>
            <person name="Lee K."/>
            <person name="Berry K.J."/>
            <person name="Lee C."/>
            <person name="Mueller J."/>
            <person name="Khouri H.M."/>
            <person name="Gill J."/>
            <person name="Utterback T.R."/>
            <person name="McDonald L.A."/>
            <person name="Feldblyum T.V."/>
            <person name="Smith H.O."/>
            <person name="Venter J.C."/>
            <person name="Nealson K.H."/>
            <person name="Fraser C.M."/>
        </authorList>
    </citation>
    <scope>NUCLEOTIDE SEQUENCE [LARGE SCALE GENOMIC DNA]</scope>
    <source>
        <strain>ATCC 700550 / JCM 31522 / CIP 106686 / LMG 19005 / NCIMB 14063 / MR-1</strain>
    </source>
</reference>
<evidence type="ECO:0000255" key="1">
    <source>
        <dbReference type="HAMAP-Rule" id="MF_00219"/>
    </source>
</evidence>
<protein>
    <recommendedName>
        <fullName evidence="1">Dihydroorotase</fullName>
        <shortName evidence="1">DHOase</shortName>
        <ecNumber evidence="1">3.5.2.3</ecNumber>
    </recommendedName>
</protein>
<accession>Q8EB40</accession>
<gene>
    <name evidence="1" type="primary">pyrC</name>
    <name type="ordered locus">SO_3695</name>
</gene>
<organism>
    <name type="scientific">Shewanella oneidensis (strain ATCC 700550 / JCM 31522 / CIP 106686 / LMG 19005 / NCIMB 14063 / MR-1)</name>
    <dbReference type="NCBI Taxonomy" id="211586"/>
    <lineage>
        <taxon>Bacteria</taxon>
        <taxon>Pseudomonadati</taxon>
        <taxon>Pseudomonadota</taxon>
        <taxon>Gammaproteobacteria</taxon>
        <taxon>Alteromonadales</taxon>
        <taxon>Shewanellaceae</taxon>
        <taxon>Shewanella</taxon>
    </lineage>
</organism>
<name>PYRC_SHEON</name>
<comment type="function">
    <text evidence="1">Catalyzes the reversible cyclization of carbamoyl aspartate to dihydroorotate.</text>
</comment>
<comment type="catalytic activity">
    <reaction evidence="1">
        <text>(S)-dihydroorotate + H2O = N-carbamoyl-L-aspartate + H(+)</text>
        <dbReference type="Rhea" id="RHEA:24296"/>
        <dbReference type="ChEBI" id="CHEBI:15377"/>
        <dbReference type="ChEBI" id="CHEBI:15378"/>
        <dbReference type="ChEBI" id="CHEBI:30864"/>
        <dbReference type="ChEBI" id="CHEBI:32814"/>
        <dbReference type="EC" id="3.5.2.3"/>
    </reaction>
</comment>
<comment type="cofactor">
    <cofactor evidence="1">
        <name>Zn(2+)</name>
        <dbReference type="ChEBI" id="CHEBI:29105"/>
    </cofactor>
    <text evidence="1">Binds 2 Zn(2+) ions per subunit.</text>
</comment>
<comment type="pathway">
    <text evidence="1">Pyrimidine metabolism; UMP biosynthesis via de novo pathway; (S)-dihydroorotate from bicarbonate: step 3/3.</text>
</comment>
<comment type="subunit">
    <text evidence="1">Homodimer.</text>
</comment>
<comment type="similarity">
    <text evidence="1">Belongs to the metallo-dependent hydrolases superfamily. DHOase family. Class II DHOase subfamily.</text>
</comment>
<proteinExistence type="inferred from homology"/>
<dbReference type="EC" id="3.5.2.3" evidence="1"/>
<dbReference type="EMBL" id="AE014299">
    <property type="protein sequence ID" value="AAN56679.1"/>
    <property type="molecule type" value="Genomic_DNA"/>
</dbReference>
<dbReference type="RefSeq" id="NP_719235.1">
    <property type="nucleotide sequence ID" value="NC_004347.2"/>
</dbReference>
<dbReference type="RefSeq" id="WP_011073490.1">
    <property type="nucleotide sequence ID" value="NC_004347.2"/>
</dbReference>
<dbReference type="SMR" id="Q8EB40"/>
<dbReference type="STRING" id="211586.SO_3695"/>
<dbReference type="PaxDb" id="211586-SO_3695"/>
<dbReference type="KEGG" id="son:SO_3695"/>
<dbReference type="PATRIC" id="fig|211586.12.peg.3581"/>
<dbReference type="eggNOG" id="COG0418">
    <property type="taxonomic scope" value="Bacteria"/>
</dbReference>
<dbReference type="HOGENOM" id="CLU_041558_1_0_6"/>
<dbReference type="OrthoDB" id="9808095at2"/>
<dbReference type="PhylomeDB" id="Q8EB40"/>
<dbReference type="BioCyc" id="SONE211586:G1GMP-3439-MONOMER"/>
<dbReference type="UniPathway" id="UPA00070">
    <property type="reaction ID" value="UER00117"/>
</dbReference>
<dbReference type="Proteomes" id="UP000008186">
    <property type="component" value="Chromosome"/>
</dbReference>
<dbReference type="GO" id="GO:0005737">
    <property type="term" value="C:cytoplasm"/>
    <property type="evidence" value="ECO:0000318"/>
    <property type="project" value="GO_Central"/>
</dbReference>
<dbReference type="GO" id="GO:0005829">
    <property type="term" value="C:cytosol"/>
    <property type="evidence" value="ECO:0000318"/>
    <property type="project" value="GO_Central"/>
</dbReference>
<dbReference type="GO" id="GO:0004151">
    <property type="term" value="F:dihydroorotase activity"/>
    <property type="evidence" value="ECO:0000318"/>
    <property type="project" value="GO_Central"/>
</dbReference>
<dbReference type="GO" id="GO:0008270">
    <property type="term" value="F:zinc ion binding"/>
    <property type="evidence" value="ECO:0007669"/>
    <property type="project" value="UniProtKB-UniRule"/>
</dbReference>
<dbReference type="GO" id="GO:0006207">
    <property type="term" value="P:'de novo' pyrimidine nucleobase biosynthetic process"/>
    <property type="evidence" value="ECO:0000318"/>
    <property type="project" value="GO_Central"/>
</dbReference>
<dbReference type="GO" id="GO:0044205">
    <property type="term" value="P:'de novo' UMP biosynthetic process"/>
    <property type="evidence" value="ECO:0007669"/>
    <property type="project" value="UniProtKB-UniRule"/>
</dbReference>
<dbReference type="GO" id="GO:0006221">
    <property type="term" value="P:pyrimidine nucleotide biosynthetic process"/>
    <property type="evidence" value="ECO:0000318"/>
    <property type="project" value="GO_Central"/>
</dbReference>
<dbReference type="CDD" id="cd01294">
    <property type="entry name" value="DHOase"/>
    <property type="match status" value="1"/>
</dbReference>
<dbReference type="FunFam" id="3.20.20.140:FF:000006">
    <property type="entry name" value="Dihydroorotase"/>
    <property type="match status" value="1"/>
</dbReference>
<dbReference type="Gene3D" id="3.20.20.140">
    <property type="entry name" value="Metal-dependent hydrolases"/>
    <property type="match status" value="1"/>
</dbReference>
<dbReference type="HAMAP" id="MF_00219">
    <property type="entry name" value="PyrC_classII"/>
    <property type="match status" value="1"/>
</dbReference>
<dbReference type="InterPro" id="IPR006680">
    <property type="entry name" value="Amidohydro-rel"/>
</dbReference>
<dbReference type="InterPro" id="IPR004721">
    <property type="entry name" value="DHOdimr"/>
</dbReference>
<dbReference type="InterPro" id="IPR002195">
    <property type="entry name" value="Dihydroorotase_CS"/>
</dbReference>
<dbReference type="InterPro" id="IPR032466">
    <property type="entry name" value="Metal_Hydrolase"/>
</dbReference>
<dbReference type="NCBIfam" id="TIGR00856">
    <property type="entry name" value="pyrC_dimer"/>
    <property type="match status" value="1"/>
</dbReference>
<dbReference type="PANTHER" id="PTHR43137">
    <property type="entry name" value="DIHYDROOROTASE"/>
    <property type="match status" value="1"/>
</dbReference>
<dbReference type="PANTHER" id="PTHR43137:SF1">
    <property type="entry name" value="DIHYDROOROTASE"/>
    <property type="match status" value="1"/>
</dbReference>
<dbReference type="Pfam" id="PF01979">
    <property type="entry name" value="Amidohydro_1"/>
    <property type="match status" value="1"/>
</dbReference>
<dbReference type="PIRSF" id="PIRSF001237">
    <property type="entry name" value="DHOdimr"/>
    <property type="match status" value="1"/>
</dbReference>
<dbReference type="SUPFAM" id="SSF51556">
    <property type="entry name" value="Metallo-dependent hydrolases"/>
    <property type="match status" value="1"/>
</dbReference>
<dbReference type="PROSITE" id="PS00482">
    <property type="entry name" value="DIHYDROOROTASE_1"/>
    <property type="match status" value="1"/>
</dbReference>
<dbReference type="PROSITE" id="PS00483">
    <property type="entry name" value="DIHYDROOROTASE_2"/>
    <property type="match status" value="1"/>
</dbReference>
<sequence length="343" mass="37851">MKTLTITRPDDWHIHLRDGAQLTDTVRDISRYMGRAIVMPNLVPPAIDTETALAYYDRIKARVPAGSQFEPLMVLYLTDKTSPDEIRKAKASGKVFAAKLYPAGATTNSDSGVTDLKNIYPALEAMQEVGMLFLVHGEVTDSSIDIFDRERVFIENILSKIVTDFPNLKIVLEHITTKDAVDFVTQASDNVAATITAHHLLYNRNHMLAGGIRPHFYCLPILKRNTHQQALLAAAASGNKKFFLGTDSAPHAKDRKEAACGCAGSYTAHAAIELYAEAFESVNALDKLEAFASFNGPDFYNLPRNSDTITLVKKAWDIPASYPLGDTNVVPIRAGEQIDWQVE</sequence>
<keyword id="KW-0378">Hydrolase</keyword>
<keyword id="KW-0479">Metal-binding</keyword>
<keyword id="KW-0665">Pyrimidine biosynthesis</keyword>
<keyword id="KW-1185">Reference proteome</keyword>
<keyword id="KW-0862">Zinc</keyword>